<keyword id="KW-0072">Autophagy</keyword>
<keyword id="KW-1017">Isopeptide bond</keyword>
<keyword id="KW-0472">Membrane</keyword>
<keyword id="KW-0653">Protein transport</keyword>
<keyword id="KW-1185">Reference proteome</keyword>
<keyword id="KW-0813">Transport</keyword>
<keyword id="KW-0832">Ubl conjugation</keyword>
<proteinExistence type="inferred from homology"/>
<comment type="function">
    <text evidence="1">Involved in cytoplasm to vacuole transport (Cvt) and autophagic vesicle formation. Autophagy is essential for maintenance of amino acid levels and protein synthesis under nitrogen starvation. Required for selective autophagic degradation of the nucleus (nucleophagy). Also required for mitophagy, which eliminates defective or superfluous mitochondria in order to fulfill cellular energy requirements and prevent excess ROS production. Conjugation with atg12, through a ubiquitin-like conjugating system involving atg7 as an E1-like activating enzyme and atg10 as an E2-like conjugating enzyme, is essential for its function. The atg12-atg5 conjugate acts as an E3-like enzyme which is required for lipidation of atg8 and atg8 association to the vesicle membranes (By similarity).</text>
</comment>
<comment type="subunit">
    <text evidence="1">Conjugated with atg12.</text>
</comment>
<comment type="subcellular location">
    <subcellularLocation>
        <location evidence="1">Preautophagosomal structure membrane</location>
        <topology evidence="1">Peripheral membrane protein</topology>
    </subcellularLocation>
</comment>
<comment type="PTM">
    <text evidence="1">Conjugated to atg12; which is essential for autophagy.</text>
</comment>
<comment type="similarity">
    <text evidence="2">Belongs to the ATG5 family.</text>
</comment>
<accession>A1DMA1</accession>
<gene>
    <name type="primary">atg5</name>
    <name type="ORF">NFIA_052680</name>
</gene>
<feature type="chain" id="PRO_0000317856" description="Autophagy protein 5">
    <location>
        <begin position="1"/>
        <end position="326"/>
    </location>
</feature>
<feature type="cross-link" description="Glycyl lysine isopeptide (Lys-Gly) (interchain with G-Cter in atg12)" evidence="1">
    <location>
        <position position="163"/>
    </location>
</feature>
<evidence type="ECO:0000250" key="1"/>
<evidence type="ECO:0000305" key="2"/>
<name>ATG5_NEOFI</name>
<sequence length="326" mass="35957">MRTSSRMENQASLSSIQRAVWDGKLPLQITLASSESRTYDQTDPYLIACPRISYLPSLLPRLRAFFSSSLIEPNSQPHEGWFSFEGVPLKWHLPVGLLYDLYAGADPASKGTRIDETDHPSSSLSDTLPWRLTVHFSDWPDEELVRLDADGMVMHDAFINSVKEADFLRNGTAKGIMTLSKEDSAGLWQAVQDVDLPSFQRISNILLPPPNQPFRNIPIRFFLPLSPDSGSPSLKVVQSPLPPSIPVATNTSQSTNLRNSPATQVQTLGSALHSLLPNLFPSRRTPVLAKPVLHGAAVPMSAPIEELVRSCAYGDGWAYIVIRMMG</sequence>
<dbReference type="EMBL" id="DS027698">
    <property type="protein sequence ID" value="EAW15922.1"/>
    <property type="molecule type" value="Genomic_DNA"/>
</dbReference>
<dbReference type="RefSeq" id="XP_001257819.1">
    <property type="nucleotide sequence ID" value="XM_001257818.1"/>
</dbReference>
<dbReference type="SMR" id="A1DMA1"/>
<dbReference type="STRING" id="331117.A1DMA1"/>
<dbReference type="EnsemblFungi" id="EAW15922">
    <property type="protein sequence ID" value="EAW15922"/>
    <property type="gene ID" value="NFIA_052680"/>
</dbReference>
<dbReference type="GeneID" id="4584334"/>
<dbReference type="KEGG" id="nfi:NFIA_052680"/>
<dbReference type="VEuPathDB" id="FungiDB:NFIA_052680"/>
<dbReference type="eggNOG" id="KOG2976">
    <property type="taxonomic scope" value="Eukaryota"/>
</dbReference>
<dbReference type="HOGENOM" id="CLU_051894_2_0_1"/>
<dbReference type="OMA" id="SIQKAVW"/>
<dbReference type="OrthoDB" id="272162at2759"/>
<dbReference type="Proteomes" id="UP000006702">
    <property type="component" value="Unassembled WGS sequence"/>
</dbReference>
<dbReference type="GO" id="GO:0034274">
    <property type="term" value="C:Atg12-Atg5-Atg16 complex"/>
    <property type="evidence" value="ECO:0007669"/>
    <property type="project" value="TreeGrafter"/>
</dbReference>
<dbReference type="GO" id="GO:0005776">
    <property type="term" value="C:autophagosome"/>
    <property type="evidence" value="ECO:0007669"/>
    <property type="project" value="TreeGrafter"/>
</dbReference>
<dbReference type="GO" id="GO:0044233">
    <property type="term" value="C:mitochondria-associated endoplasmic reticulum membrane contact site"/>
    <property type="evidence" value="ECO:0007669"/>
    <property type="project" value="TreeGrafter"/>
</dbReference>
<dbReference type="GO" id="GO:0061908">
    <property type="term" value="C:phagophore"/>
    <property type="evidence" value="ECO:0007669"/>
    <property type="project" value="TreeGrafter"/>
</dbReference>
<dbReference type="GO" id="GO:0034045">
    <property type="term" value="C:phagophore assembly site membrane"/>
    <property type="evidence" value="ECO:0007669"/>
    <property type="project" value="UniProtKB-SubCell"/>
</dbReference>
<dbReference type="GO" id="GO:0019776">
    <property type="term" value="F:Atg8-family ligase activity"/>
    <property type="evidence" value="ECO:0007669"/>
    <property type="project" value="TreeGrafter"/>
</dbReference>
<dbReference type="GO" id="GO:0000422">
    <property type="term" value="P:autophagy of mitochondrion"/>
    <property type="evidence" value="ECO:0007669"/>
    <property type="project" value="TreeGrafter"/>
</dbReference>
<dbReference type="GO" id="GO:0006995">
    <property type="term" value="P:cellular response to nitrogen starvation"/>
    <property type="evidence" value="ECO:0007669"/>
    <property type="project" value="TreeGrafter"/>
</dbReference>
<dbReference type="GO" id="GO:0034727">
    <property type="term" value="P:piecemeal microautophagy of the nucleus"/>
    <property type="evidence" value="ECO:0007669"/>
    <property type="project" value="TreeGrafter"/>
</dbReference>
<dbReference type="GO" id="GO:0015031">
    <property type="term" value="P:protein transport"/>
    <property type="evidence" value="ECO:0007669"/>
    <property type="project" value="UniProtKB-KW"/>
</dbReference>
<dbReference type="FunFam" id="1.10.246.190:FF:000004">
    <property type="entry name" value="Autophagy protein 5"/>
    <property type="match status" value="1"/>
</dbReference>
<dbReference type="FunFam" id="3.10.20.620:FF:000004">
    <property type="entry name" value="Autophagy protein 5"/>
    <property type="match status" value="1"/>
</dbReference>
<dbReference type="FunFam" id="3.10.20.90:FF:000290">
    <property type="entry name" value="Autophagy protein 5"/>
    <property type="match status" value="1"/>
</dbReference>
<dbReference type="Gene3D" id="3.10.20.620">
    <property type="match status" value="1"/>
</dbReference>
<dbReference type="Gene3D" id="1.10.246.190">
    <property type="entry name" value="Autophagy protein Apg5, helix rich domain"/>
    <property type="match status" value="1"/>
</dbReference>
<dbReference type="Gene3D" id="3.10.20.90">
    <property type="entry name" value="Phosphatidylinositol 3-kinase Catalytic Subunit, Chain A, domain 1"/>
    <property type="match status" value="1"/>
</dbReference>
<dbReference type="InterPro" id="IPR007239">
    <property type="entry name" value="Atg5"/>
</dbReference>
<dbReference type="InterPro" id="IPR048940">
    <property type="entry name" value="ATG5_HBR"/>
</dbReference>
<dbReference type="InterPro" id="IPR042526">
    <property type="entry name" value="Atg5_HR"/>
</dbReference>
<dbReference type="InterPro" id="IPR048939">
    <property type="entry name" value="ATG5_UblA"/>
</dbReference>
<dbReference type="InterPro" id="IPR042527">
    <property type="entry name" value="Atg5_UblA_dom_sf"/>
</dbReference>
<dbReference type="InterPro" id="IPR048318">
    <property type="entry name" value="ATG5_UblB"/>
</dbReference>
<dbReference type="PANTHER" id="PTHR13040">
    <property type="entry name" value="AUTOPHAGY PROTEIN 5"/>
    <property type="match status" value="1"/>
</dbReference>
<dbReference type="PANTHER" id="PTHR13040:SF2">
    <property type="entry name" value="AUTOPHAGY PROTEIN 5"/>
    <property type="match status" value="1"/>
</dbReference>
<dbReference type="Pfam" id="PF20637">
    <property type="entry name" value="ATG5_HBR"/>
    <property type="match status" value="1"/>
</dbReference>
<dbReference type="Pfam" id="PF20638">
    <property type="entry name" value="ATG5_UblA"/>
    <property type="match status" value="1"/>
</dbReference>
<dbReference type="Pfam" id="PF04106">
    <property type="entry name" value="ATG5_UblB"/>
    <property type="match status" value="1"/>
</dbReference>
<organism>
    <name type="scientific">Neosartorya fischeri (strain ATCC 1020 / DSM 3700 / CBS 544.65 / FGSC A1164 / JCM 1740 / NRRL 181 / WB 181)</name>
    <name type="common">Aspergillus fischerianus</name>
    <dbReference type="NCBI Taxonomy" id="331117"/>
    <lineage>
        <taxon>Eukaryota</taxon>
        <taxon>Fungi</taxon>
        <taxon>Dikarya</taxon>
        <taxon>Ascomycota</taxon>
        <taxon>Pezizomycotina</taxon>
        <taxon>Eurotiomycetes</taxon>
        <taxon>Eurotiomycetidae</taxon>
        <taxon>Eurotiales</taxon>
        <taxon>Aspergillaceae</taxon>
        <taxon>Aspergillus</taxon>
        <taxon>Aspergillus subgen. Fumigati</taxon>
    </lineage>
</organism>
<reference key="1">
    <citation type="journal article" date="2008" name="PLoS Genet.">
        <title>Genomic islands in the pathogenic filamentous fungus Aspergillus fumigatus.</title>
        <authorList>
            <person name="Fedorova N.D."/>
            <person name="Khaldi N."/>
            <person name="Joardar V.S."/>
            <person name="Maiti R."/>
            <person name="Amedeo P."/>
            <person name="Anderson M.J."/>
            <person name="Crabtree J."/>
            <person name="Silva J.C."/>
            <person name="Badger J.H."/>
            <person name="Albarraq A."/>
            <person name="Angiuoli S."/>
            <person name="Bussey H."/>
            <person name="Bowyer P."/>
            <person name="Cotty P.J."/>
            <person name="Dyer P.S."/>
            <person name="Egan A."/>
            <person name="Galens K."/>
            <person name="Fraser-Liggett C.M."/>
            <person name="Haas B.J."/>
            <person name="Inman J.M."/>
            <person name="Kent R."/>
            <person name="Lemieux S."/>
            <person name="Malavazi I."/>
            <person name="Orvis J."/>
            <person name="Roemer T."/>
            <person name="Ronning C.M."/>
            <person name="Sundaram J.P."/>
            <person name="Sutton G."/>
            <person name="Turner G."/>
            <person name="Venter J.C."/>
            <person name="White O.R."/>
            <person name="Whitty B.R."/>
            <person name="Youngman P."/>
            <person name="Wolfe K.H."/>
            <person name="Goldman G.H."/>
            <person name="Wortman J.R."/>
            <person name="Jiang B."/>
            <person name="Denning D.W."/>
            <person name="Nierman W.C."/>
        </authorList>
    </citation>
    <scope>NUCLEOTIDE SEQUENCE [LARGE SCALE GENOMIC DNA]</scope>
    <source>
        <strain>ATCC 1020 / DSM 3700 / CBS 544.65 / FGSC A1164 / JCM 1740 / NRRL 181 / WB 181</strain>
    </source>
</reference>
<protein>
    <recommendedName>
        <fullName>Autophagy protein 5</fullName>
    </recommendedName>
</protein>